<organism>
    <name type="scientific">Dehalococcoides mccartyi (strain CBDB1)</name>
    <dbReference type="NCBI Taxonomy" id="255470"/>
    <lineage>
        <taxon>Bacteria</taxon>
        <taxon>Bacillati</taxon>
        <taxon>Chloroflexota</taxon>
        <taxon>Dehalococcoidia</taxon>
        <taxon>Dehalococcoidales</taxon>
        <taxon>Dehalococcoidaceae</taxon>
        <taxon>Dehalococcoides</taxon>
    </lineage>
</organism>
<gene>
    <name evidence="1" type="primary">rimM</name>
    <name type="ordered locus">cbdbA540</name>
</gene>
<reference key="1">
    <citation type="journal article" date="2005" name="Nat. Biotechnol.">
        <title>Genome sequence of the chlorinated compound-respiring bacterium Dehalococcoides species strain CBDB1.</title>
        <authorList>
            <person name="Kube M."/>
            <person name="Beck A."/>
            <person name="Zinder S.H."/>
            <person name="Kuhl H."/>
            <person name="Reinhardt R."/>
            <person name="Adrian L."/>
        </authorList>
    </citation>
    <scope>NUCLEOTIDE SEQUENCE [LARGE SCALE GENOMIC DNA]</scope>
    <source>
        <strain>CBDB1</strain>
    </source>
</reference>
<protein>
    <recommendedName>
        <fullName evidence="1">Ribosome maturation factor RimM</fullName>
    </recommendedName>
</protein>
<name>RIMM_DEHMC</name>
<sequence length="166" mass="18186">MTQEEYILIGKVLGVWGISGGLKIGVLTDFPERFDAGNELLVGRKLYTISQTNWQKAQVIVHLSGIDDIDTALELKDALVEIPASALKELPEGVYYDFQLIGLEVVDLSGVKIGQIKEILHMPSNDIYVSSYGVKEALIPAIKDVVKEINLKTGKIIIDPIPGLLD</sequence>
<proteinExistence type="inferred from homology"/>
<evidence type="ECO:0000255" key="1">
    <source>
        <dbReference type="HAMAP-Rule" id="MF_00014"/>
    </source>
</evidence>
<comment type="function">
    <text evidence="1">An accessory protein needed during the final step in the assembly of 30S ribosomal subunit, possibly for assembly of the head region. Essential for efficient processing of 16S rRNA. May be needed both before and after RbfA during the maturation of 16S rRNA. It has affinity for free ribosomal 30S subunits but not for 70S ribosomes.</text>
</comment>
<comment type="subunit">
    <text evidence="1">Binds ribosomal protein uS19.</text>
</comment>
<comment type="subcellular location">
    <subcellularLocation>
        <location evidence="1">Cytoplasm</location>
    </subcellularLocation>
</comment>
<comment type="domain">
    <text evidence="1">The PRC barrel domain binds ribosomal protein uS19.</text>
</comment>
<comment type="similarity">
    <text evidence="1">Belongs to the RimM family.</text>
</comment>
<dbReference type="EMBL" id="AJ965256">
    <property type="protein sequence ID" value="CAI82728.1"/>
    <property type="molecule type" value="Genomic_DNA"/>
</dbReference>
<dbReference type="RefSeq" id="WP_011309080.1">
    <property type="nucleotide sequence ID" value="NC_007356.1"/>
</dbReference>
<dbReference type="SMR" id="Q3ZZT5"/>
<dbReference type="KEGG" id="deh:cbdbA540"/>
<dbReference type="HOGENOM" id="CLU_077636_3_2_0"/>
<dbReference type="Proteomes" id="UP000000433">
    <property type="component" value="Chromosome"/>
</dbReference>
<dbReference type="GO" id="GO:0005737">
    <property type="term" value="C:cytoplasm"/>
    <property type="evidence" value="ECO:0007669"/>
    <property type="project" value="UniProtKB-SubCell"/>
</dbReference>
<dbReference type="GO" id="GO:0005840">
    <property type="term" value="C:ribosome"/>
    <property type="evidence" value="ECO:0007669"/>
    <property type="project" value="InterPro"/>
</dbReference>
<dbReference type="GO" id="GO:0043022">
    <property type="term" value="F:ribosome binding"/>
    <property type="evidence" value="ECO:0007669"/>
    <property type="project" value="InterPro"/>
</dbReference>
<dbReference type="GO" id="GO:0042274">
    <property type="term" value="P:ribosomal small subunit biogenesis"/>
    <property type="evidence" value="ECO:0007669"/>
    <property type="project" value="UniProtKB-UniRule"/>
</dbReference>
<dbReference type="GO" id="GO:0006364">
    <property type="term" value="P:rRNA processing"/>
    <property type="evidence" value="ECO:0007669"/>
    <property type="project" value="UniProtKB-UniRule"/>
</dbReference>
<dbReference type="Gene3D" id="2.30.30.240">
    <property type="entry name" value="PRC-barrel domain"/>
    <property type="match status" value="1"/>
</dbReference>
<dbReference type="Gene3D" id="2.40.30.60">
    <property type="entry name" value="RimM"/>
    <property type="match status" value="1"/>
</dbReference>
<dbReference type="HAMAP" id="MF_00014">
    <property type="entry name" value="Ribosome_mat_RimM"/>
    <property type="match status" value="1"/>
</dbReference>
<dbReference type="InterPro" id="IPR011033">
    <property type="entry name" value="PRC_barrel-like_sf"/>
</dbReference>
<dbReference type="InterPro" id="IPR056792">
    <property type="entry name" value="PRC_RimM"/>
</dbReference>
<dbReference type="InterPro" id="IPR011961">
    <property type="entry name" value="RimM"/>
</dbReference>
<dbReference type="InterPro" id="IPR002676">
    <property type="entry name" value="RimM_N"/>
</dbReference>
<dbReference type="InterPro" id="IPR036976">
    <property type="entry name" value="RimM_N_sf"/>
</dbReference>
<dbReference type="InterPro" id="IPR009000">
    <property type="entry name" value="Transl_B-barrel_sf"/>
</dbReference>
<dbReference type="NCBIfam" id="TIGR02273">
    <property type="entry name" value="16S_RimM"/>
    <property type="match status" value="1"/>
</dbReference>
<dbReference type="PANTHER" id="PTHR33692">
    <property type="entry name" value="RIBOSOME MATURATION FACTOR RIMM"/>
    <property type="match status" value="1"/>
</dbReference>
<dbReference type="PANTHER" id="PTHR33692:SF1">
    <property type="entry name" value="RIBOSOME MATURATION FACTOR RIMM"/>
    <property type="match status" value="1"/>
</dbReference>
<dbReference type="Pfam" id="PF24986">
    <property type="entry name" value="PRC_RimM"/>
    <property type="match status" value="1"/>
</dbReference>
<dbReference type="Pfam" id="PF01782">
    <property type="entry name" value="RimM"/>
    <property type="match status" value="1"/>
</dbReference>
<dbReference type="SUPFAM" id="SSF50346">
    <property type="entry name" value="PRC-barrel domain"/>
    <property type="match status" value="1"/>
</dbReference>
<dbReference type="SUPFAM" id="SSF50447">
    <property type="entry name" value="Translation proteins"/>
    <property type="match status" value="1"/>
</dbReference>
<accession>Q3ZZT5</accession>
<feature type="chain" id="PRO_0000244125" description="Ribosome maturation factor RimM">
    <location>
        <begin position="1"/>
        <end position="166"/>
    </location>
</feature>
<feature type="domain" description="PRC barrel" evidence="1">
    <location>
        <begin position="92"/>
        <end position="164"/>
    </location>
</feature>
<keyword id="KW-0143">Chaperone</keyword>
<keyword id="KW-0963">Cytoplasm</keyword>
<keyword id="KW-0690">Ribosome biogenesis</keyword>
<keyword id="KW-0698">rRNA processing</keyword>